<accession>B1JIJ3</accession>
<organism>
    <name type="scientific">Yersinia pseudotuberculosis serotype O:3 (strain YPIII)</name>
    <dbReference type="NCBI Taxonomy" id="502800"/>
    <lineage>
        <taxon>Bacteria</taxon>
        <taxon>Pseudomonadati</taxon>
        <taxon>Pseudomonadota</taxon>
        <taxon>Gammaproteobacteria</taxon>
        <taxon>Enterobacterales</taxon>
        <taxon>Yersiniaceae</taxon>
        <taxon>Yersinia</taxon>
    </lineage>
</organism>
<sequence>MYHDLIRSELNEAADTLANFLKDDSNIDAIQRAAILLADSFKAGGKVLSCGNGGSHCDAMHFAEELTGRYRENRPGYPAIAISDVSHLSCVSNDFGYDYVFSRYVEAVGREGDVLLGISTSGNSGNIIKAIEAARAKGMKVITLTGKDGGKMAGSADIEIRVPHFGYADRIQEIHIKVIHILIQLIEKEMVKA</sequence>
<reference key="1">
    <citation type="submission" date="2008-02" db="EMBL/GenBank/DDBJ databases">
        <title>Complete sequence of Yersinia pseudotuberculosis YPIII.</title>
        <authorList>
            <consortium name="US DOE Joint Genome Institute"/>
            <person name="Copeland A."/>
            <person name="Lucas S."/>
            <person name="Lapidus A."/>
            <person name="Glavina del Rio T."/>
            <person name="Dalin E."/>
            <person name="Tice H."/>
            <person name="Bruce D."/>
            <person name="Goodwin L."/>
            <person name="Pitluck S."/>
            <person name="Munk A.C."/>
            <person name="Brettin T."/>
            <person name="Detter J.C."/>
            <person name="Han C."/>
            <person name="Tapia R."/>
            <person name="Schmutz J."/>
            <person name="Larimer F."/>
            <person name="Land M."/>
            <person name="Hauser L."/>
            <person name="Challacombe J.F."/>
            <person name="Green L."/>
            <person name="Lindler L.E."/>
            <person name="Nikolich M.P."/>
            <person name="Richardson P."/>
        </authorList>
    </citation>
    <scope>NUCLEOTIDE SEQUENCE [LARGE SCALE GENOMIC DNA]</scope>
    <source>
        <strain>YPIII</strain>
    </source>
</reference>
<protein>
    <recommendedName>
        <fullName evidence="1">Phosphoheptose isomerase</fullName>
        <ecNumber evidence="1">5.3.1.28</ecNumber>
    </recommendedName>
    <alternativeName>
        <fullName evidence="1">Sedoheptulose 7-phosphate isomerase</fullName>
    </alternativeName>
</protein>
<evidence type="ECO:0000255" key="1">
    <source>
        <dbReference type="HAMAP-Rule" id="MF_00067"/>
    </source>
</evidence>
<name>GMHA_YERPY</name>
<proteinExistence type="inferred from homology"/>
<gene>
    <name evidence="1" type="primary">gmhA</name>
    <name type="ordered locus">YPK_3308</name>
</gene>
<keyword id="KW-0119">Carbohydrate metabolism</keyword>
<keyword id="KW-0963">Cytoplasm</keyword>
<keyword id="KW-0413">Isomerase</keyword>
<keyword id="KW-0479">Metal-binding</keyword>
<keyword id="KW-0862">Zinc</keyword>
<comment type="function">
    <text evidence="1">Catalyzes the isomerization of sedoheptulose 7-phosphate in D-glycero-D-manno-heptose 7-phosphate.</text>
</comment>
<comment type="catalytic activity">
    <reaction evidence="1">
        <text>2 D-sedoheptulose 7-phosphate = D-glycero-alpha-D-manno-heptose 7-phosphate + D-glycero-beta-D-manno-heptose 7-phosphate</text>
        <dbReference type="Rhea" id="RHEA:27489"/>
        <dbReference type="ChEBI" id="CHEBI:57483"/>
        <dbReference type="ChEBI" id="CHEBI:60203"/>
        <dbReference type="ChEBI" id="CHEBI:60204"/>
        <dbReference type="EC" id="5.3.1.28"/>
    </reaction>
</comment>
<comment type="cofactor">
    <cofactor evidence="1">
        <name>Zn(2+)</name>
        <dbReference type="ChEBI" id="CHEBI:29105"/>
    </cofactor>
    <text evidence="1">Binds 1 zinc ion per subunit.</text>
</comment>
<comment type="pathway">
    <text evidence="1">Carbohydrate biosynthesis; D-glycero-D-manno-heptose 7-phosphate biosynthesis; D-glycero-alpha-D-manno-heptose 7-phosphate and D-glycero-beta-D-manno-heptose 7-phosphate from sedoheptulose 7-phosphate: step 1/1.</text>
</comment>
<comment type="subunit">
    <text evidence="1">Homotetramer.</text>
</comment>
<comment type="subcellular location">
    <subcellularLocation>
        <location evidence="1">Cytoplasm</location>
    </subcellularLocation>
</comment>
<comment type="miscellaneous">
    <text evidence="1">The reaction produces a racemic mixture of D-glycero-alpha-D-manno-heptose 7-phosphate and D-glycero-beta-D-manno-heptose 7-phosphate.</text>
</comment>
<comment type="similarity">
    <text evidence="1">Belongs to the SIS family. GmhA subfamily.</text>
</comment>
<feature type="chain" id="PRO_1000092297" description="Phosphoheptose isomerase">
    <location>
        <begin position="1"/>
        <end position="193"/>
    </location>
</feature>
<feature type="domain" description="SIS" evidence="1">
    <location>
        <begin position="37"/>
        <end position="193"/>
    </location>
</feature>
<feature type="binding site" evidence="1">
    <location>
        <begin position="52"/>
        <end position="54"/>
    </location>
    <ligand>
        <name>substrate</name>
    </ligand>
</feature>
<feature type="binding site" evidence="1">
    <location>
        <position position="61"/>
    </location>
    <ligand>
        <name>Zn(2+)</name>
        <dbReference type="ChEBI" id="CHEBI:29105"/>
    </ligand>
</feature>
<feature type="binding site" evidence="1">
    <location>
        <position position="65"/>
    </location>
    <ligand>
        <name>substrate</name>
    </ligand>
</feature>
<feature type="binding site" evidence="1">
    <location>
        <position position="65"/>
    </location>
    <ligand>
        <name>Zn(2+)</name>
        <dbReference type="ChEBI" id="CHEBI:29105"/>
    </ligand>
</feature>
<feature type="binding site" evidence="1">
    <location>
        <begin position="93"/>
        <end position="94"/>
    </location>
    <ligand>
        <name>substrate</name>
    </ligand>
</feature>
<feature type="binding site" evidence="1">
    <location>
        <begin position="119"/>
        <end position="121"/>
    </location>
    <ligand>
        <name>substrate</name>
    </ligand>
</feature>
<feature type="binding site" evidence="1">
    <location>
        <position position="124"/>
    </location>
    <ligand>
        <name>substrate</name>
    </ligand>
</feature>
<feature type="binding site" evidence="1">
    <location>
        <position position="172"/>
    </location>
    <ligand>
        <name>substrate</name>
    </ligand>
</feature>
<feature type="binding site" evidence="1">
    <location>
        <position position="172"/>
    </location>
    <ligand>
        <name>Zn(2+)</name>
        <dbReference type="ChEBI" id="CHEBI:29105"/>
    </ligand>
</feature>
<feature type="binding site" evidence="1">
    <location>
        <position position="180"/>
    </location>
    <ligand>
        <name>Zn(2+)</name>
        <dbReference type="ChEBI" id="CHEBI:29105"/>
    </ligand>
</feature>
<dbReference type="EC" id="5.3.1.28" evidence="1"/>
<dbReference type="EMBL" id="CP000950">
    <property type="protein sequence ID" value="ACA69577.1"/>
    <property type="molecule type" value="Genomic_DNA"/>
</dbReference>
<dbReference type="SMR" id="B1JIJ3"/>
<dbReference type="KEGG" id="ypy:YPK_3308"/>
<dbReference type="PATRIC" id="fig|502800.11.peg.4043"/>
<dbReference type="UniPathway" id="UPA00041">
    <property type="reaction ID" value="UER00436"/>
</dbReference>
<dbReference type="GO" id="GO:0005737">
    <property type="term" value="C:cytoplasm"/>
    <property type="evidence" value="ECO:0007669"/>
    <property type="project" value="UniProtKB-SubCell"/>
</dbReference>
<dbReference type="GO" id="GO:0097367">
    <property type="term" value="F:carbohydrate derivative binding"/>
    <property type="evidence" value="ECO:0007669"/>
    <property type="project" value="InterPro"/>
</dbReference>
<dbReference type="GO" id="GO:0008968">
    <property type="term" value="F:D-sedoheptulose 7-phosphate isomerase activity"/>
    <property type="evidence" value="ECO:0007669"/>
    <property type="project" value="UniProtKB-UniRule"/>
</dbReference>
<dbReference type="GO" id="GO:0008270">
    <property type="term" value="F:zinc ion binding"/>
    <property type="evidence" value="ECO:0007669"/>
    <property type="project" value="UniProtKB-UniRule"/>
</dbReference>
<dbReference type="GO" id="GO:0005975">
    <property type="term" value="P:carbohydrate metabolic process"/>
    <property type="evidence" value="ECO:0007669"/>
    <property type="project" value="UniProtKB-UniRule"/>
</dbReference>
<dbReference type="GO" id="GO:2001061">
    <property type="term" value="P:D-glycero-D-manno-heptose 7-phosphate biosynthetic process"/>
    <property type="evidence" value="ECO:0007669"/>
    <property type="project" value="UniProtKB-UniPathway"/>
</dbReference>
<dbReference type="CDD" id="cd05006">
    <property type="entry name" value="SIS_GmhA"/>
    <property type="match status" value="1"/>
</dbReference>
<dbReference type="FunFam" id="3.40.50.10490:FF:000013">
    <property type="entry name" value="Phosphoheptose isomerase"/>
    <property type="match status" value="1"/>
</dbReference>
<dbReference type="Gene3D" id="3.40.50.10490">
    <property type="entry name" value="Glucose-6-phosphate isomerase like protein, domain 1"/>
    <property type="match status" value="1"/>
</dbReference>
<dbReference type="HAMAP" id="MF_00067">
    <property type="entry name" value="GmhA"/>
    <property type="match status" value="1"/>
</dbReference>
<dbReference type="InterPro" id="IPR035461">
    <property type="entry name" value="GmhA/DiaA"/>
</dbReference>
<dbReference type="InterPro" id="IPR004515">
    <property type="entry name" value="Phosphoheptose_Isoase"/>
</dbReference>
<dbReference type="InterPro" id="IPR001347">
    <property type="entry name" value="SIS_dom"/>
</dbReference>
<dbReference type="InterPro" id="IPR046348">
    <property type="entry name" value="SIS_dom_sf"/>
</dbReference>
<dbReference type="InterPro" id="IPR050099">
    <property type="entry name" value="SIS_GmhA/DiaA_subfam"/>
</dbReference>
<dbReference type="NCBIfam" id="TIGR00441">
    <property type="entry name" value="gmhA"/>
    <property type="match status" value="1"/>
</dbReference>
<dbReference type="NCBIfam" id="NF001628">
    <property type="entry name" value="PRK00414.1"/>
    <property type="match status" value="1"/>
</dbReference>
<dbReference type="PANTHER" id="PTHR30390:SF7">
    <property type="entry name" value="PHOSPHOHEPTOSE ISOMERASE"/>
    <property type="match status" value="1"/>
</dbReference>
<dbReference type="PANTHER" id="PTHR30390">
    <property type="entry name" value="SEDOHEPTULOSE 7-PHOSPHATE ISOMERASE / DNAA INITIATOR-ASSOCIATING FACTOR FOR REPLICATION INITIATION"/>
    <property type="match status" value="1"/>
</dbReference>
<dbReference type="Pfam" id="PF13580">
    <property type="entry name" value="SIS_2"/>
    <property type="match status" value="1"/>
</dbReference>
<dbReference type="SUPFAM" id="SSF53697">
    <property type="entry name" value="SIS domain"/>
    <property type="match status" value="1"/>
</dbReference>
<dbReference type="PROSITE" id="PS51464">
    <property type="entry name" value="SIS"/>
    <property type="match status" value="1"/>
</dbReference>